<proteinExistence type="inferred from homology"/>
<comment type="function">
    <text evidence="1">Isomerase that catalyzes the conversion of deoxy-ribose 1-phosphate (dRib-1-P) and ribose 1-phosphate (Rib-1-P) to deoxy-ribose 5-phosphate (dRib-5-P) and ribose 5-phosphate (Rib-5-P), respectively.</text>
</comment>
<comment type="catalytic activity">
    <reaction evidence="1">
        <text>2-deoxy-alpha-D-ribose 1-phosphate = 2-deoxy-D-ribose 5-phosphate</text>
        <dbReference type="Rhea" id="RHEA:27658"/>
        <dbReference type="ChEBI" id="CHEBI:57259"/>
        <dbReference type="ChEBI" id="CHEBI:62877"/>
        <dbReference type="EC" id="5.4.2.7"/>
    </reaction>
</comment>
<comment type="catalytic activity">
    <reaction evidence="1">
        <text>alpha-D-ribose 1-phosphate = D-ribose 5-phosphate</text>
        <dbReference type="Rhea" id="RHEA:18793"/>
        <dbReference type="ChEBI" id="CHEBI:57720"/>
        <dbReference type="ChEBI" id="CHEBI:78346"/>
        <dbReference type="EC" id="5.4.2.7"/>
    </reaction>
</comment>
<comment type="cofactor">
    <cofactor evidence="1">
        <name>Mn(2+)</name>
        <dbReference type="ChEBI" id="CHEBI:29035"/>
    </cofactor>
    <text evidence="1">Binds 2 manganese ions.</text>
</comment>
<comment type="pathway">
    <text evidence="1">Carbohydrate degradation; 2-deoxy-D-ribose 1-phosphate degradation; D-glyceraldehyde 3-phosphate and acetaldehyde from 2-deoxy-alpha-D-ribose 1-phosphate: step 1/2.</text>
</comment>
<comment type="subcellular location">
    <subcellularLocation>
        <location evidence="1">Cytoplasm</location>
    </subcellularLocation>
</comment>
<comment type="similarity">
    <text evidence="1">Belongs to the phosphopentomutase family.</text>
</comment>
<reference key="1">
    <citation type="submission" date="2007-10" db="EMBL/GenBank/DDBJ databases">
        <title>Complete sequence of Shewanella pealeana ATCC 700345.</title>
        <authorList>
            <consortium name="US DOE Joint Genome Institute"/>
            <person name="Copeland A."/>
            <person name="Lucas S."/>
            <person name="Lapidus A."/>
            <person name="Barry K."/>
            <person name="Glavina del Rio T."/>
            <person name="Dalin E."/>
            <person name="Tice H."/>
            <person name="Pitluck S."/>
            <person name="Chertkov O."/>
            <person name="Brettin T."/>
            <person name="Bruce D."/>
            <person name="Detter J.C."/>
            <person name="Han C."/>
            <person name="Schmutz J."/>
            <person name="Larimer F."/>
            <person name="Land M."/>
            <person name="Hauser L."/>
            <person name="Kyrpides N."/>
            <person name="Kim E."/>
            <person name="Zhao J.-S.Z."/>
            <person name="Manno D."/>
            <person name="Hawari J."/>
            <person name="Richardson P."/>
        </authorList>
    </citation>
    <scope>NUCLEOTIDE SEQUENCE [LARGE SCALE GENOMIC DNA]</scope>
    <source>
        <strain>ATCC 700345 / ANG-SQ1</strain>
    </source>
</reference>
<feature type="chain" id="PRO_1000083442" description="Phosphopentomutase">
    <location>
        <begin position="1"/>
        <end position="405"/>
    </location>
</feature>
<feature type="binding site" evidence="1">
    <location>
        <position position="10"/>
    </location>
    <ligand>
        <name>Mn(2+)</name>
        <dbReference type="ChEBI" id="CHEBI:29035"/>
        <label>1</label>
    </ligand>
</feature>
<feature type="binding site" evidence="1">
    <location>
        <position position="303"/>
    </location>
    <ligand>
        <name>Mn(2+)</name>
        <dbReference type="ChEBI" id="CHEBI:29035"/>
        <label>2</label>
    </ligand>
</feature>
<feature type="binding site" evidence="1">
    <location>
        <position position="308"/>
    </location>
    <ligand>
        <name>Mn(2+)</name>
        <dbReference type="ChEBI" id="CHEBI:29035"/>
        <label>2</label>
    </ligand>
</feature>
<feature type="binding site" evidence="1">
    <location>
        <position position="344"/>
    </location>
    <ligand>
        <name>Mn(2+)</name>
        <dbReference type="ChEBI" id="CHEBI:29035"/>
        <label>1</label>
    </ligand>
</feature>
<feature type="binding site" evidence="1">
    <location>
        <position position="345"/>
    </location>
    <ligand>
        <name>Mn(2+)</name>
        <dbReference type="ChEBI" id="CHEBI:29035"/>
        <label>1</label>
    </ligand>
</feature>
<feature type="binding site" evidence="1">
    <location>
        <position position="356"/>
    </location>
    <ligand>
        <name>Mn(2+)</name>
        <dbReference type="ChEBI" id="CHEBI:29035"/>
        <label>2</label>
    </ligand>
</feature>
<organism>
    <name type="scientific">Shewanella pealeana (strain ATCC 700345 / ANG-SQ1)</name>
    <dbReference type="NCBI Taxonomy" id="398579"/>
    <lineage>
        <taxon>Bacteria</taxon>
        <taxon>Pseudomonadati</taxon>
        <taxon>Pseudomonadota</taxon>
        <taxon>Gammaproteobacteria</taxon>
        <taxon>Alteromonadales</taxon>
        <taxon>Shewanellaceae</taxon>
        <taxon>Shewanella</taxon>
    </lineage>
</organism>
<protein>
    <recommendedName>
        <fullName evidence="1">Phosphopentomutase</fullName>
        <ecNumber evidence="1">5.4.2.7</ecNumber>
    </recommendedName>
    <alternativeName>
        <fullName evidence="1">Phosphodeoxyribomutase</fullName>
    </alternativeName>
</protein>
<accession>A8H726</accession>
<evidence type="ECO:0000255" key="1">
    <source>
        <dbReference type="HAMAP-Rule" id="MF_00740"/>
    </source>
</evidence>
<keyword id="KW-0963">Cytoplasm</keyword>
<keyword id="KW-0413">Isomerase</keyword>
<keyword id="KW-0464">Manganese</keyword>
<keyword id="KW-0479">Metal-binding</keyword>
<keyword id="KW-1185">Reference proteome</keyword>
<gene>
    <name evidence="1" type="primary">deoB</name>
    <name type="ordered locus">Spea_3046</name>
</gene>
<sequence length="405" mass="43796">MKRTIIMMLDSFGVGAAHDAEAFGDVGSNTFGHIAKACAEGKANDGREGPLKLPNLARLGLGHASKESTGEFPAGFGDDVEVIGAYGHADELSSGKDTPSGHWEMAGVPVLYEWGYFSELTNSFPQALTDKILARAGLTEFLGNCHSSGTVILDELGEEHMRTGKPIFYTSADSVFQIACHEESFGLEKLYELCIIAREELADYNIGRVIARPFVGTGPGSFERTGNRRDYAVEPPAPTVLDKLKAAGGEVVSVGKIADIYAHCGITKKVKATGLEALFDATLEQVKLAGDNTIVFTNFVDFDSHYGHRRDVAGYARSLEYFDSRLPEILALLDEDDFLLLTADHGCDPTWPGSDHTRERVPVLAYGAGLEAGSLGLRSSFADMGQSIASYFKLEPMEYGESFIR</sequence>
<dbReference type="EC" id="5.4.2.7" evidence="1"/>
<dbReference type="EMBL" id="CP000851">
    <property type="protein sequence ID" value="ABV88363.1"/>
    <property type="molecule type" value="Genomic_DNA"/>
</dbReference>
<dbReference type="RefSeq" id="WP_012156267.1">
    <property type="nucleotide sequence ID" value="NC_009901.1"/>
</dbReference>
<dbReference type="SMR" id="A8H726"/>
<dbReference type="STRING" id="398579.Spea_3046"/>
<dbReference type="KEGG" id="spl:Spea_3046"/>
<dbReference type="eggNOG" id="COG1015">
    <property type="taxonomic scope" value="Bacteria"/>
</dbReference>
<dbReference type="HOGENOM" id="CLU_053861_0_0_6"/>
<dbReference type="OrthoDB" id="9769930at2"/>
<dbReference type="UniPathway" id="UPA00002">
    <property type="reaction ID" value="UER00467"/>
</dbReference>
<dbReference type="Proteomes" id="UP000002608">
    <property type="component" value="Chromosome"/>
</dbReference>
<dbReference type="GO" id="GO:0005829">
    <property type="term" value="C:cytosol"/>
    <property type="evidence" value="ECO:0007669"/>
    <property type="project" value="TreeGrafter"/>
</dbReference>
<dbReference type="GO" id="GO:0000287">
    <property type="term" value="F:magnesium ion binding"/>
    <property type="evidence" value="ECO:0007669"/>
    <property type="project" value="InterPro"/>
</dbReference>
<dbReference type="GO" id="GO:0030145">
    <property type="term" value="F:manganese ion binding"/>
    <property type="evidence" value="ECO:0007669"/>
    <property type="project" value="UniProtKB-UniRule"/>
</dbReference>
<dbReference type="GO" id="GO:0008973">
    <property type="term" value="F:phosphopentomutase activity"/>
    <property type="evidence" value="ECO:0007669"/>
    <property type="project" value="UniProtKB-UniRule"/>
</dbReference>
<dbReference type="GO" id="GO:0006018">
    <property type="term" value="P:2-deoxyribose 1-phosphate catabolic process"/>
    <property type="evidence" value="ECO:0007669"/>
    <property type="project" value="UniProtKB-UniRule"/>
</dbReference>
<dbReference type="GO" id="GO:0006015">
    <property type="term" value="P:5-phosphoribose 1-diphosphate biosynthetic process"/>
    <property type="evidence" value="ECO:0007669"/>
    <property type="project" value="UniProtKB-UniPathway"/>
</dbReference>
<dbReference type="GO" id="GO:0043094">
    <property type="term" value="P:metabolic compound salvage"/>
    <property type="evidence" value="ECO:0007669"/>
    <property type="project" value="InterPro"/>
</dbReference>
<dbReference type="GO" id="GO:0009117">
    <property type="term" value="P:nucleotide metabolic process"/>
    <property type="evidence" value="ECO:0007669"/>
    <property type="project" value="InterPro"/>
</dbReference>
<dbReference type="CDD" id="cd16009">
    <property type="entry name" value="PPM"/>
    <property type="match status" value="1"/>
</dbReference>
<dbReference type="FunFam" id="3.30.70.1250:FF:000001">
    <property type="entry name" value="Phosphopentomutase"/>
    <property type="match status" value="1"/>
</dbReference>
<dbReference type="Gene3D" id="3.40.720.10">
    <property type="entry name" value="Alkaline Phosphatase, subunit A"/>
    <property type="match status" value="1"/>
</dbReference>
<dbReference type="Gene3D" id="3.30.70.1250">
    <property type="entry name" value="Phosphopentomutase"/>
    <property type="match status" value="1"/>
</dbReference>
<dbReference type="HAMAP" id="MF_00740">
    <property type="entry name" value="Phosphopentomut"/>
    <property type="match status" value="1"/>
</dbReference>
<dbReference type="InterPro" id="IPR017850">
    <property type="entry name" value="Alkaline_phosphatase_core_sf"/>
</dbReference>
<dbReference type="InterPro" id="IPR010045">
    <property type="entry name" value="DeoB"/>
</dbReference>
<dbReference type="InterPro" id="IPR006124">
    <property type="entry name" value="Metalloenzyme"/>
</dbReference>
<dbReference type="InterPro" id="IPR024052">
    <property type="entry name" value="Phosphopentomutase_DeoB_cap_sf"/>
</dbReference>
<dbReference type="NCBIfam" id="TIGR01696">
    <property type="entry name" value="deoB"/>
    <property type="match status" value="1"/>
</dbReference>
<dbReference type="NCBIfam" id="NF003766">
    <property type="entry name" value="PRK05362.1"/>
    <property type="match status" value="1"/>
</dbReference>
<dbReference type="PANTHER" id="PTHR21110">
    <property type="entry name" value="PHOSPHOPENTOMUTASE"/>
    <property type="match status" value="1"/>
</dbReference>
<dbReference type="PANTHER" id="PTHR21110:SF0">
    <property type="entry name" value="PHOSPHOPENTOMUTASE"/>
    <property type="match status" value="1"/>
</dbReference>
<dbReference type="Pfam" id="PF01676">
    <property type="entry name" value="Metalloenzyme"/>
    <property type="match status" value="1"/>
</dbReference>
<dbReference type="PIRSF" id="PIRSF001491">
    <property type="entry name" value="Ppentomutase"/>
    <property type="match status" value="1"/>
</dbReference>
<dbReference type="SUPFAM" id="SSF53649">
    <property type="entry name" value="Alkaline phosphatase-like"/>
    <property type="match status" value="1"/>
</dbReference>
<dbReference type="SUPFAM" id="SSF143856">
    <property type="entry name" value="DeoB insert domain-like"/>
    <property type="match status" value="1"/>
</dbReference>
<name>DEOB_SHEPA</name>